<accession>Q68VN4</accession>
<feature type="chain" id="PRO_0000274891" description="DNA mismatch repair protein MutL">
    <location>
        <begin position="1"/>
        <end position="600"/>
    </location>
</feature>
<organism>
    <name type="scientific">Rickettsia typhi (strain ATCC VR-144 / Wilmington)</name>
    <dbReference type="NCBI Taxonomy" id="257363"/>
    <lineage>
        <taxon>Bacteria</taxon>
        <taxon>Pseudomonadati</taxon>
        <taxon>Pseudomonadota</taxon>
        <taxon>Alphaproteobacteria</taxon>
        <taxon>Rickettsiales</taxon>
        <taxon>Rickettsiaceae</taxon>
        <taxon>Rickettsieae</taxon>
        <taxon>Rickettsia</taxon>
        <taxon>typhus group</taxon>
    </lineage>
</organism>
<name>MUTL_RICTY</name>
<keyword id="KW-0227">DNA damage</keyword>
<keyword id="KW-0234">DNA repair</keyword>
<proteinExistence type="inferred from homology"/>
<reference key="1">
    <citation type="journal article" date="2004" name="J. Bacteriol.">
        <title>Complete genome sequence of Rickettsia typhi and comparison with sequences of other Rickettsiae.</title>
        <authorList>
            <person name="McLeod M.P."/>
            <person name="Qin X."/>
            <person name="Karpathy S.E."/>
            <person name="Gioia J."/>
            <person name="Highlander S.K."/>
            <person name="Fox G.E."/>
            <person name="McNeill T.Z."/>
            <person name="Jiang H."/>
            <person name="Muzny D."/>
            <person name="Jacob L.S."/>
            <person name="Hawes A.C."/>
            <person name="Sodergren E."/>
            <person name="Gill R."/>
            <person name="Hume J."/>
            <person name="Morgan M."/>
            <person name="Fan G."/>
            <person name="Amin A.G."/>
            <person name="Gibbs R.A."/>
            <person name="Hong C."/>
            <person name="Yu X.-J."/>
            <person name="Walker D.H."/>
            <person name="Weinstock G.M."/>
        </authorList>
    </citation>
    <scope>NUCLEOTIDE SEQUENCE [LARGE SCALE GENOMIC DNA]</scope>
    <source>
        <strain>ATCC VR-144 / Wilmington</strain>
    </source>
</reference>
<comment type="function">
    <text evidence="1">This protein is involved in the repair of mismatches in DNA. It is required for dam-dependent methyl-directed DNA mismatch repair. May act as a 'molecular matchmaker', a protein that promotes the formation of a stable complex between two or more DNA-binding proteins in an ATP-dependent manner without itself being part of a final effector complex.</text>
</comment>
<comment type="similarity">
    <text evidence="1">Belongs to the DNA mismatch repair MutL/HexB family.</text>
</comment>
<sequence>MTIKFLSESTINRIAAGEVIERPASVVKELVENAVDGGSTKIDIILERAGKNLIIVSDDGIGMTDKELEIAVERHTTSKLNESDFLNIHTFGFRGEALPSIAAISKMLITSKKREADKAFQIKLIGGNKQQITVSVHNEGTKIEIRDLFFATPARLKFLKSDRTELAASLDIVKKIALAHPKISFNLIHNSKNLLKLKGQNKDFETNLKQRIIDVIGDVFIKNASYINFKTPDFSICGYTSIPTYSRASSEDQFLFINNRPIKDKLLQVALRVAYQDYLARDRYALCAIFLQIDPQLVDVNVHPAKAEVRFHDPNYVRNILIEAIKNALTNKSQVTVTTTDAIELFKNPLVNKQPPINKAINVNSKASEYISFNFNRNTVCQKLTLQSDKIEQEVGKCIEHDNQSYKQYKFGIAKAQLHTTYIISQTEDSIVIIDQHAVYERLGYEKIKYCLKNGELVKQRLLIPEIVELSSGEKADYLYENRDKLFKLSLTIEKFGEKSIIVTEVPNLLRDVNVQKLIQDLADHLSDFSKNIALKELIEHVIKIYICHYSIRAVRKLSVDEMNSLLRQMENMSFSAQCNHNRPTYIELKLKDIERLFRL</sequence>
<protein>
    <recommendedName>
        <fullName evidence="1">DNA mismatch repair protein MutL</fullName>
    </recommendedName>
</protein>
<gene>
    <name evidence="1" type="primary">mutL</name>
    <name type="ordered locus">RT0871</name>
</gene>
<dbReference type="EMBL" id="AE017197">
    <property type="protein sequence ID" value="AAU04322.1"/>
    <property type="molecule type" value="Genomic_DNA"/>
</dbReference>
<dbReference type="RefSeq" id="WP_011191296.1">
    <property type="nucleotide sequence ID" value="NC_006142.1"/>
</dbReference>
<dbReference type="SMR" id="Q68VN4"/>
<dbReference type="KEGG" id="rty:RT0871"/>
<dbReference type="eggNOG" id="COG0323">
    <property type="taxonomic scope" value="Bacteria"/>
</dbReference>
<dbReference type="HOGENOM" id="CLU_004131_4_2_5"/>
<dbReference type="OrthoDB" id="9763467at2"/>
<dbReference type="Proteomes" id="UP000000604">
    <property type="component" value="Chromosome"/>
</dbReference>
<dbReference type="GO" id="GO:0032300">
    <property type="term" value="C:mismatch repair complex"/>
    <property type="evidence" value="ECO:0007669"/>
    <property type="project" value="InterPro"/>
</dbReference>
<dbReference type="GO" id="GO:0005524">
    <property type="term" value="F:ATP binding"/>
    <property type="evidence" value="ECO:0007669"/>
    <property type="project" value="InterPro"/>
</dbReference>
<dbReference type="GO" id="GO:0016887">
    <property type="term" value="F:ATP hydrolysis activity"/>
    <property type="evidence" value="ECO:0007669"/>
    <property type="project" value="InterPro"/>
</dbReference>
<dbReference type="GO" id="GO:0140664">
    <property type="term" value="F:ATP-dependent DNA damage sensor activity"/>
    <property type="evidence" value="ECO:0007669"/>
    <property type="project" value="InterPro"/>
</dbReference>
<dbReference type="GO" id="GO:0030983">
    <property type="term" value="F:mismatched DNA binding"/>
    <property type="evidence" value="ECO:0007669"/>
    <property type="project" value="InterPro"/>
</dbReference>
<dbReference type="GO" id="GO:0006298">
    <property type="term" value="P:mismatch repair"/>
    <property type="evidence" value="ECO:0007669"/>
    <property type="project" value="UniProtKB-UniRule"/>
</dbReference>
<dbReference type="CDD" id="cd16926">
    <property type="entry name" value="HATPase_MutL-MLH-PMS-like"/>
    <property type="match status" value="1"/>
</dbReference>
<dbReference type="CDD" id="cd00782">
    <property type="entry name" value="MutL_Trans"/>
    <property type="match status" value="1"/>
</dbReference>
<dbReference type="FunFam" id="3.30.565.10:FF:000003">
    <property type="entry name" value="DNA mismatch repair endonuclease MutL"/>
    <property type="match status" value="1"/>
</dbReference>
<dbReference type="Gene3D" id="3.30.230.10">
    <property type="match status" value="1"/>
</dbReference>
<dbReference type="Gene3D" id="3.30.565.10">
    <property type="entry name" value="Histidine kinase-like ATPase, C-terminal domain"/>
    <property type="match status" value="1"/>
</dbReference>
<dbReference type="Gene3D" id="3.30.1540.20">
    <property type="entry name" value="MutL, C-terminal domain, dimerisation subdomain"/>
    <property type="match status" value="1"/>
</dbReference>
<dbReference type="Gene3D" id="3.30.1370.100">
    <property type="entry name" value="MutL, C-terminal domain, regulatory subdomain"/>
    <property type="match status" value="1"/>
</dbReference>
<dbReference type="HAMAP" id="MF_00149">
    <property type="entry name" value="DNA_mis_repair"/>
    <property type="match status" value="1"/>
</dbReference>
<dbReference type="InterPro" id="IPR014762">
    <property type="entry name" value="DNA_mismatch_repair_CS"/>
</dbReference>
<dbReference type="InterPro" id="IPR020667">
    <property type="entry name" value="DNA_mismatch_repair_MutL"/>
</dbReference>
<dbReference type="InterPro" id="IPR013507">
    <property type="entry name" value="DNA_mismatch_S5_2-like"/>
</dbReference>
<dbReference type="InterPro" id="IPR036890">
    <property type="entry name" value="HATPase_C_sf"/>
</dbReference>
<dbReference type="InterPro" id="IPR002099">
    <property type="entry name" value="MutL/Mlh/PMS"/>
</dbReference>
<dbReference type="InterPro" id="IPR038973">
    <property type="entry name" value="MutL/Mlh/Pms-like"/>
</dbReference>
<dbReference type="InterPro" id="IPR014790">
    <property type="entry name" value="MutL_C"/>
</dbReference>
<dbReference type="InterPro" id="IPR042120">
    <property type="entry name" value="MutL_C_dimsub"/>
</dbReference>
<dbReference type="InterPro" id="IPR042121">
    <property type="entry name" value="MutL_C_regsub"/>
</dbReference>
<dbReference type="InterPro" id="IPR037198">
    <property type="entry name" value="MutL_C_sf"/>
</dbReference>
<dbReference type="InterPro" id="IPR020568">
    <property type="entry name" value="Ribosomal_Su5_D2-typ_SF"/>
</dbReference>
<dbReference type="InterPro" id="IPR014721">
    <property type="entry name" value="Ribsml_uS5_D2-typ_fold_subgr"/>
</dbReference>
<dbReference type="NCBIfam" id="TIGR00585">
    <property type="entry name" value="mutl"/>
    <property type="match status" value="1"/>
</dbReference>
<dbReference type="NCBIfam" id="NF000952">
    <property type="entry name" value="PRK00095.2-2"/>
    <property type="match status" value="1"/>
</dbReference>
<dbReference type="NCBIfam" id="NF000953">
    <property type="entry name" value="PRK00095.2-4"/>
    <property type="match status" value="1"/>
</dbReference>
<dbReference type="PANTHER" id="PTHR10073">
    <property type="entry name" value="DNA MISMATCH REPAIR PROTEIN MLH, PMS, MUTL"/>
    <property type="match status" value="1"/>
</dbReference>
<dbReference type="PANTHER" id="PTHR10073:SF12">
    <property type="entry name" value="DNA MISMATCH REPAIR PROTEIN MLH1"/>
    <property type="match status" value="1"/>
</dbReference>
<dbReference type="Pfam" id="PF01119">
    <property type="entry name" value="DNA_mis_repair"/>
    <property type="match status" value="1"/>
</dbReference>
<dbReference type="Pfam" id="PF13589">
    <property type="entry name" value="HATPase_c_3"/>
    <property type="match status" value="1"/>
</dbReference>
<dbReference type="Pfam" id="PF08676">
    <property type="entry name" value="MutL_C"/>
    <property type="match status" value="1"/>
</dbReference>
<dbReference type="SMART" id="SM01340">
    <property type="entry name" value="DNA_mis_repair"/>
    <property type="match status" value="1"/>
</dbReference>
<dbReference type="SMART" id="SM00853">
    <property type="entry name" value="MutL_C"/>
    <property type="match status" value="1"/>
</dbReference>
<dbReference type="SUPFAM" id="SSF55874">
    <property type="entry name" value="ATPase domain of HSP90 chaperone/DNA topoisomerase II/histidine kinase"/>
    <property type="match status" value="1"/>
</dbReference>
<dbReference type="SUPFAM" id="SSF118116">
    <property type="entry name" value="DNA mismatch repair protein MutL"/>
    <property type="match status" value="1"/>
</dbReference>
<dbReference type="SUPFAM" id="SSF54211">
    <property type="entry name" value="Ribosomal protein S5 domain 2-like"/>
    <property type="match status" value="1"/>
</dbReference>
<dbReference type="PROSITE" id="PS00058">
    <property type="entry name" value="DNA_MISMATCH_REPAIR_1"/>
    <property type="match status" value="1"/>
</dbReference>
<evidence type="ECO:0000255" key="1">
    <source>
        <dbReference type="HAMAP-Rule" id="MF_00149"/>
    </source>
</evidence>